<name>CH601_ANASL</name>
<proteinExistence type="evidence at protein level"/>
<gene>
    <name evidence="1" type="primary">groEL1</name>
    <name type="synonym">groL</name>
    <name evidence="1" type="synonym">groL1</name>
</gene>
<comment type="function">
    <text evidence="1">Together with its co-chaperonin GroES, plays an essential role in assisting protein folding. The GroEL-GroES system forms a nano-cage that allows encapsulation of the non-native substrate proteins and provides a physical environment optimized to promote and accelerate protein folding.</text>
</comment>
<comment type="catalytic activity">
    <reaction evidence="1">
        <text>ATP + H2O + a folded polypeptide = ADP + phosphate + an unfolded polypeptide.</text>
        <dbReference type="EC" id="5.6.1.7"/>
    </reaction>
</comment>
<comment type="subunit">
    <text evidence="1">Forms a cylinder of 14 subunits composed of two heptameric rings stacked back-to-back. Interacts with the co-chaperonin GroES.</text>
</comment>
<comment type="subcellular location">
    <subcellularLocation>
        <location evidence="1">Cytoplasm</location>
    </subcellularLocation>
</comment>
<comment type="induction">
    <text evidence="3 4">By heat shock under both nitrogen-fixing and nitrogen-supplemented growth conditions. Induced within 5 to 15 minutes of the start of heat stress, levels peak after 1 hour and expression continues throughout the period of heat stress.</text>
</comment>
<comment type="similarity">
    <text evidence="1">Belongs to the chaperonin (HSP60) family.</text>
</comment>
<sequence length="543" mass="57915">MAKRIIYNENARRALERGIDILAEAVAVTLGPKGRNVVLEKKYGAPQIVNDGVTIAKEIELEDHIENTGVALIRQAASKTNDVAGDGTTTATVLAHAIVKEGLRNVAAGANAILLKRGIDKATNFLVDRIREHARSVEDSKAIAQVGAISAGNDDEVRQMIAEALDKVGKEAVISLEEGKSVTTELEVTEGMRFDKGYISPYFATDPERMEAIFDEPFLAVDDKQIALVQDLVPVLEPVARAGRPLVIIAEDIEKEALATLVVNRLRGVLNVAAVKAPGFGDRRKAMLEDIAILTGGQLITEDAGLKLDNTKLDSLGKARRITITKDSTTIVAEGNDVAVKARVEQIRRQMEETESSYDKGKLQERLAKLSGGVAVVKVGAATETEMKDKKLRLEDAINATKAAVEEGIVPGGGTTLAHLTPELEAWANSTLKDEELTGALIVARALPAPLKRIAENAGQNGAVIAERVKEKEFNVDFNAATNEFVDMFSAGIVDPAKVTRSALQNALSYACMVLTTGTVVDKPEPKDAAPAGVGGGGGDFDY</sequence>
<evidence type="ECO:0000255" key="1">
    <source>
        <dbReference type="HAMAP-Rule" id="MF_00600"/>
    </source>
</evidence>
<evidence type="ECO:0000256" key="2">
    <source>
        <dbReference type="SAM" id="MobiDB-lite"/>
    </source>
</evidence>
<evidence type="ECO:0000269" key="3">
    <source>
    </source>
</evidence>
<evidence type="ECO:0000269" key="4">
    <source>
    </source>
</evidence>
<evidence type="ECO:0000305" key="5"/>
<protein>
    <recommendedName>
        <fullName evidence="1">Chaperonin GroEL 1</fullName>
        <ecNumber evidence="1">5.6.1.7</ecNumber>
    </recommendedName>
    <alternativeName>
        <fullName evidence="1">60 kDa chaperonin 1</fullName>
    </alternativeName>
    <alternativeName>
        <fullName evidence="1">Chaperonin-60 1</fullName>
        <shortName evidence="1">Cpn60 1</shortName>
    </alternativeName>
</protein>
<reference key="1">
    <citation type="journal article" date="2008" name="Microbiology">
        <title>Nitrogen status and heat-stress-dependent differential expression of the cpn60 chaperonin gene influences thermotolerance in the cyanobacterium Anabaena.</title>
        <authorList>
            <person name="Rajaram H."/>
            <person name="Apte S.K."/>
        </authorList>
    </citation>
    <scope>NUCLEOTIDE SEQUENCE [GENOMIC DNA]</scope>
    <scope>INDUCTION</scope>
</reference>
<reference key="2">
    <citation type="submission" date="2008-12" db="UniProtKB">
        <authorList>
            <person name="Rajaram H."/>
            <person name="Apte S.K."/>
        </authorList>
    </citation>
    <scope>PROTEIN SEQUENCE OF 42-70; 197-224 AND 454-468</scope>
</reference>
<reference key="3">
    <citation type="journal article" date="2003" name="Arch. Microbiol.">
        <title>Heat-shock response and its contribution to thermotolerance of the nitrogen-fixing cyanobacterium Anabaena sp. strain L-31.</title>
        <authorList>
            <person name="Rajaram H."/>
            <person name="Apte S.K."/>
        </authorList>
    </citation>
    <scope>INDUCTION</scope>
</reference>
<feature type="chain" id="PRO_0000063263" description="Chaperonin GroEL 1">
    <location>
        <begin position="1"/>
        <end position="543"/>
    </location>
</feature>
<feature type="region of interest" description="Disordered" evidence="2">
    <location>
        <begin position="524"/>
        <end position="543"/>
    </location>
</feature>
<feature type="compositionally biased region" description="Gly residues" evidence="2">
    <location>
        <begin position="533"/>
        <end position="543"/>
    </location>
</feature>
<feature type="binding site" evidence="1">
    <location>
        <begin position="29"/>
        <end position="32"/>
    </location>
    <ligand>
        <name>ATP</name>
        <dbReference type="ChEBI" id="CHEBI:30616"/>
    </ligand>
</feature>
<feature type="binding site" evidence="1">
    <location>
        <begin position="86"/>
        <end position="90"/>
    </location>
    <ligand>
        <name>ATP</name>
        <dbReference type="ChEBI" id="CHEBI:30616"/>
    </ligand>
</feature>
<feature type="binding site" evidence="1">
    <location>
        <position position="413"/>
    </location>
    <ligand>
        <name>ATP</name>
        <dbReference type="ChEBI" id="CHEBI:30616"/>
    </ligand>
</feature>
<feature type="binding site" evidence="1">
    <location>
        <begin position="479"/>
        <end position="481"/>
    </location>
    <ligand>
        <name>ATP</name>
        <dbReference type="ChEBI" id="CHEBI:30616"/>
    </ligand>
</feature>
<feature type="binding site" evidence="1">
    <location>
        <position position="495"/>
    </location>
    <ligand>
        <name>ATP</name>
        <dbReference type="ChEBI" id="CHEBI:30616"/>
    </ligand>
</feature>
<feature type="sequence conflict" description="In Ref. 2; AA sequence." evidence="5" ref="2">
    <original>Y</original>
    <variation>F</variation>
    <location>
        <position position="43"/>
    </location>
</feature>
<feature type="sequence conflict" description="In Ref. 2; AA sequence." evidence="5" ref="2">
    <original>AVD</original>
    <variation>LLT</variation>
    <location>
        <begin position="220"/>
        <end position="222"/>
    </location>
</feature>
<organism>
    <name type="scientific">Anabaena sp. (strain L31)</name>
    <dbReference type="NCBI Taxonomy" id="29412"/>
    <lineage>
        <taxon>Bacteria</taxon>
        <taxon>Bacillati</taxon>
        <taxon>Cyanobacteriota</taxon>
        <taxon>Cyanophyceae</taxon>
        <taxon>Nostocales</taxon>
        <taxon>Nostocaceae</taxon>
        <taxon>Anabaena</taxon>
    </lineage>
</organism>
<dbReference type="EC" id="5.6.1.7" evidence="1"/>
<dbReference type="EMBL" id="AF324500">
    <property type="protein sequence ID" value="AAG49581.1"/>
    <property type="molecule type" value="Genomic_DNA"/>
</dbReference>
<dbReference type="SMR" id="Q9AMJ8"/>
<dbReference type="GO" id="GO:0005737">
    <property type="term" value="C:cytoplasm"/>
    <property type="evidence" value="ECO:0007669"/>
    <property type="project" value="UniProtKB-SubCell"/>
</dbReference>
<dbReference type="GO" id="GO:0005524">
    <property type="term" value="F:ATP binding"/>
    <property type="evidence" value="ECO:0007669"/>
    <property type="project" value="UniProtKB-UniRule"/>
</dbReference>
<dbReference type="GO" id="GO:0140662">
    <property type="term" value="F:ATP-dependent protein folding chaperone"/>
    <property type="evidence" value="ECO:0007669"/>
    <property type="project" value="InterPro"/>
</dbReference>
<dbReference type="GO" id="GO:0016853">
    <property type="term" value="F:isomerase activity"/>
    <property type="evidence" value="ECO:0007669"/>
    <property type="project" value="UniProtKB-KW"/>
</dbReference>
<dbReference type="GO" id="GO:0051082">
    <property type="term" value="F:unfolded protein binding"/>
    <property type="evidence" value="ECO:0007669"/>
    <property type="project" value="UniProtKB-UniRule"/>
</dbReference>
<dbReference type="GO" id="GO:0042026">
    <property type="term" value="P:protein refolding"/>
    <property type="evidence" value="ECO:0007669"/>
    <property type="project" value="UniProtKB-UniRule"/>
</dbReference>
<dbReference type="CDD" id="cd03344">
    <property type="entry name" value="GroEL"/>
    <property type="match status" value="1"/>
</dbReference>
<dbReference type="FunFam" id="3.50.7.10:FF:000001">
    <property type="entry name" value="60 kDa chaperonin"/>
    <property type="match status" value="1"/>
</dbReference>
<dbReference type="Gene3D" id="3.50.7.10">
    <property type="entry name" value="GroEL"/>
    <property type="match status" value="1"/>
</dbReference>
<dbReference type="Gene3D" id="1.10.560.10">
    <property type="entry name" value="GroEL-like equatorial domain"/>
    <property type="match status" value="1"/>
</dbReference>
<dbReference type="Gene3D" id="3.30.260.10">
    <property type="entry name" value="TCP-1-like chaperonin intermediate domain"/>
    <property type="match status" value="1"/>
</dbReference>
<dbReference type="HAMAP" id="MF_00600">
    <property type="entry name" value="CH60"/>
    <property type="match status" value="1"/>
</dbReference>
<dbReference type="InterPro" id="IPR018370">
    <property type="entry name" value="Chaperonin_Cpn60_CS"/>
</dbReference>
<dbReference type="InterPro" id="IPR001844">
    <property type="entry name" value="Cpn60/GroEL"/>
</dbReference>
<dbReference type="InterPro" id="IPR002423">
    <property type="entry name" value="Cpn60/GroEL/TCP-1"/>
</dbReference>
<dbReference type="InterPro" id="IPR027409">
    <property type="entry name" value="GroEL-like_apical_dom_sf"/>
</dbReference>
<dbReference type="InterPro" id="IPR027413">
    <property type="entry name" value="GROEL-like_equatorial_sf"/>
</dbReference>
<dbReference type="InterPro" id="IPR027410">
    <property type="entry name" value="TCP-1-like_intermed_sf"/>
</dbReference>
<dbReference type="NCBIfam" id="TIGR02348">
    <property type="entry name" value="GroEL"/>
    <property type="match status" value="1"/>
</dbReference>
<dbReference type="NCBIfam" id="NF000592">
    <property type="entry name" value="PRK00013.1"/>
    <property type="match status" value="1"/>
</dbReference>
<dbReference type="NCBIfam" id="NF009487">
    <property type="entry name" value="PRK12849.1"/>
    <property type="match status" value="1"/>
</dbReference>
<dbReference type="NCBIfam" id="NF009488">
    <property type="entry name" value="PRK12850.1"/>
    <property type="match status" value="1"/>
</dbReference>
<dbReference type="NCBIfam" id="NF009489">
    <property type="entry name" value="PRK12851.1"/>
    <property type="match status" value="1"/>
</dbReference>
<dbReference type="PANTHER" id="PTHR45633">
    <property type="entry name" value="60 KDA HEAT SHOCK PROTEIN, MITOCHONDRIAL"/>
    <property type="match status" value="1"/>
</dbReference>
<dbReference type="Pfam" id="PF00118">
    <property type="entry name" value="Cpn60_TCP1"/>
    <property type="match status" value="1"/>
</dbReference>
<dbReference type="PRINTS" id="PR00298">
    <property type="entry name" value="CHAPERONIN60"/>
</dbReference>
<dbReference type="SUPFAM" id="SSF52029">
    <property type="entry name" value="GroEL apical domain-like"/>
    <property type="match status" value="1"/>
</dbReference>
<dbReference type="SUPFAM" id="SSF48592">
    <property type="entry name" value="GroEL equatorial domain-like"/>
    <property type="match status" value="2"/>
</dbReference>
<dbReference type="PROSITE" id="PS00296">
    <property type="entry name" value="CHAPERONINS_CPN60"/>
    <property type="match status" value="1"/>
</dbReference>
<keyword id="KW-0067">ATP-binding</keyword>
<keyword id="KW-0143">Chaperone</keyword>
<keyword id="KW-0963">Cytoplasm</keyword>
<keyword id="KW-0903">Direct protein sequencing</keyword>
<keyword id="KW-0413">Isomerase</keyword>
<keyword id="KW-0547">Nucleotide-binding</keyword>
<keyword id="KW-0346">Stress response</keyword>
<accession>Q9AMJ8</accession>